<accession>Q607Q3</accession>
<sequence length="542" mass="57442">MAAKEVRFSDDARHRMLAGVNILADAVKQTLGPKGRNVVLEKSFGAPVVTKDGVSVAKEIELKDKFENMGAQMVKEVASKTSDVAGDGTTTATVLAQAIVREGLKSVAAGANPMDIKRGIDQAVGVVVEELKKLSKPCTDSKAIAQVGTISANSDESIGQIIAQAMDTVGKEGVITVEEGSGLQNELDVVEGMQFDRGYLSPYFINKQDTMGVELENPYVLLHDKKISSIRDLLPVLEKTAKAGRSLLIIAEDVDGEALATLVVNNMRGILKVCAVKAPGFGDRRKAMLEDIAILTGGQVISEELGLSLEKVELTDLGQAKKIQINKETTTIVDGAGSADAIKARVEQIRKQIEDTTSDYDREKLQERVAKLAGGVAVIKVGAATEVEMKEKKARVEDALHATRAAVEEGIVPGGGVALIRAQQALKTLEGKNHDQTVGIAILRRAIEEPLRQIVANAGEEPSVVLAKVQEGTGTFGYNAGTAEYGDMIEMGILDPTKVTRSALQNAASVAGLMLTTEAMVAEMPKKEKGGMPAGGGMDDMM</sequence>
<reference key="1">
    <citation type="journal article" date="2004" name="PLoS Biol.">
        <title>Genomic insights into methanotrophy: the complete genome sequence of Methylococcus capsulatus (Bath).</title>
        <authorList>
            <person name="Ward N.L."/>
            <person name="Larsen O."/>
            <person name="Sakwa J."/>
            <person name="Bruseth L."/>
            <person name="Khouri H.M."/>
            <person name="Durkin A.S."/>
            <person name="Dimitrov G."/>
            <person name="Jiang L."/>
            <person name="Scanlan D."/>
            <person name="Kang K.H."/>
            <person name="Lewis M.R."/>
            <person name="Nelson K.E."/>
            <person name="Methe B.A."/>
            <person name="Wu M."/>
            <person name="Heidelberg J.F."/>
            <person name="Paulsen I.T."/>
            <person name="Fouts D.E."/>
            <person name="Ravel J."/>
            <person name="Tettelin H."/>
            <person name="Ren Q."/>
            <person name="Read T.D."/>
            <person name="DeBoy R.T."/>
            <person name="Seshadri R."/>
            <person name="Salzberg S.L."/>
            <person name="Jensen H.B."/>
            <person name="Birkeland N.K."/>
            <person name="Nelson W.C."/>
            <person name="Dodson R.J."/>
            <person name="Grindhaug S.H."/>
            <person name="Holt I.E."/>
            <person name="Eidhammer I."/>
            <person name="Jonasen I."/>
            <person name="Vanaken S."/>
            <person name="Utterback T.R."/>
            <person name="Feldblyum T.V."/>
            <person name="Fraser C.M."/>
            <person name="Lillehaug J.R."/>
            <person name="Eisen J.A."/>
        </authorList>
    </citation>
    <scope>NUCLEOTIDE SEQUENCE [LARGE SCALE GENOMIC DNA]</scope>
    <source>
        <strain>ATCC 33009 / NCIMB 11132 / Bath</strain>
    </source>
</reference>
<dbReference type="EC" id="5.6.1.7" evidence="1"/>
<dbReference type="EMBL" id="AE017282">
    <property type="protein sequence ID" value="AAU92040.1"/>
    <property type="molecule type" value="Genomic_DNA"/>
</dbReference>
<dbReference type="RefSeq" id="WP_010960960.1">
    <property type="nucleotide sequence ID" value="NC_002977.6"/>
</dbReference>
<dbReference type="SMR" id="Q607Q3"/>
<dbReference type="STRING" id="243233.MCA1704"/>
<dbReference type="GeneID" id="88223957"/>
<dbReference type="KEGG" id="mca:MCA1704"/>
<dbReference type="eggNOG" id="COG0459">
    <property type="taxonomic scope" value="Bacteria"/>
</dbReference>
<dbReference type="HOGENOM" id="CLU_016503_3_0_6"/>
<dbReference type="Proteomes" id="UP000006821">
    <property type="component" value="Chromosome"/>
</dbReference>
<dbReference type="GO" id="GO:0005737">
    <property type="term" value="C:cytoplasm"/>
    <property type="evidence" value="ECO:0007669"/>
    <property type="project" value="UniProtKB-SubCell"/>
</dbReference>
<dbReference type="GO" id="GO:0005524">
    <property type="term" value="F:ATP binding"/>
    <property type="evidence" value="ECO:0007669"/>
    <property type="project" value="UniProtKB-UniRule"/>
</dbReference>
<dbReference type="GO" id="GO:0140662">
    <property type="term" value="F:ATP-dependent protein folding chaperone"/>
    <property type="evidence" value="ECO:0007669"/>
    <property type="project" value="InterPro"/>
</dbReference>
<dbReference type="GO" id="GO:0016853">
    <property type="term" value="F:isomerase activity"/>
    <property type="evidence" value="ECO:0007669"/>
    <property type="project" value="UniProtKB-KW"/>
</dbReference>
<dbReference type="GO" id="GO:0051082">
    <property type="term" value="F:unfolded protein binding"/>
    <property type="evidence" value="ECO:0007669"/>
    <property type="project" value="UniProtKB-UniRule"/>
</dbReference>
<dbReference type="GO" id="GO:0042026">
    <property type="term" value="P:protein refolding"/>
    <property type="evidence" value="ECO:0007669"/>
    <property type="project" value="UniProtKB-UniRule"/>
</dbReference>
<dbReference type="CDD" id="cd03344">
    <property type="entry name" value="GroEL"/>
    <property type="match status" value="1"/>
</dbReference>
<dbReference type="FunFam" id="1.10.560.10:FF:000001">
    <property type="entry name" value="60 kDa chaperonin"/>
    <property type="match status" value="1"/>
</dbReference>
<dbReference type="FunFam" id="3.50.7.10:FF:000001">
    <property type="entry name" value="60 kDa chaperonin"/>
    <property type="match status" value="1"/>
</dbReference>
<dbReference type="Gene3D" id="3.50.7.10">
    <property type="entry name" value="GroEL"/>
    <property type="match status" value="1"/>
</dbReference>
<dbReference type="Gene3D" id="1.10.560.10">
    <property type="entry name" value="GroEL-like equatorial domain"/>
    <property type="match status" value="1"/>
</dbReference>
<dbReference type="Gene3D" id="3.30.260.10">
    <property type="entry name" value="TCP-1-like chaperonin intermediate domain"/>
    <property type="match status" value="1"/>
</dbReference>
<dbReference type="HAMAP" id="MF_00600">
    <property type="entry name" value="CH60"/>
    <property type="match status" value="1"/>
</dbReference>
<dbReference type="InterPro" id="IPR018370">
    <property type="entry name" value="Chaperonin_Cpn60_CS"/>
</dbReference>
<dbReference type="InterPro" id="IPR001844">
    <property type="entry name" value="Cpn60/GroEL"/>
</dbReference>
<dbReference type="InterPro" id="IPR002423">
    <property type="entry name" value="Cpn60/GroEL/TCP-1"/>
</dbReference>
<dbReference type="InterPro" id="IPR027409">
    <property type="entry name" value="GroEL-like_apical_dom_sf"/>
</dbReference>
<dbReference type="InterPro" id="IPR027413">
    <property type="entry name" value="GROEL-like_equatorial_sf"/>
</dbReference>
<dbReference type="InterPro" id="IPR027410">
    <property type="entry name" value="TCP-1-like_intermed_sf"/>
</dbReference>
<dbReference type="NCBIfam" id="TIGR02348">
    <property type="entry name" value="GroEL"/>
    <property type="match status" value="1"/>
</dbReference>
<dbReference type="NCBIfam" id="NF000592">
    <property type="entry name" value="PRK00013.1"/>
    <property type="match status" value="1"/>
</dbReference>
<dbReference type="NCBIfam" id="NF009487">
    <property type="entry name" value="PRK12849.1"/>
    <property type="match status" value="1"/>
</dbReference>
<dbReference type="NCBIfam" id="NF009488">
    <property type="entry name" value="PRK12850.1"/>
    <property type="match status" value="1"/>
</dbReference>
<dbReference type="NCBIfam" id="NF009489">
    <property type="entry name" value="PRK12851.1"/>
    <property type="match status" value="1"/>
</dbReference>
<dbReference type="PANTHER" id="PTHR45633">
    <property type="entry name" value="60 KDA HEAT SHOCK PROTEIN, MITOCHONDRIAL"/>
    <property type="match status" value="1"/>
</dbReference>
<dbReference type="Pfam" id="PF00118">
    <property type="entry name" value="Cpn60_TCP1"/>
    <property type="match status" value="1"/>
</dbReference>
<dbReference type="PRINTS" id="PR00298">
    <property type="entry name" value="CHAPERONIN60"/>
</dbReference>
<dbReference type="SUPFAM" id="SSF52029">
    <property type="entry name" value="GroEL apical domain-like"/>
    <property type="match status" value="1"/>
</dbReference>
<dbReference type="SUPFAM" id="SSF48592">
    <property type="entry name" value="GroEL equatorial domain-like"/>
    <property type="match status" value="1"/>
</dbReference>
<dbReference type="SUPFAM" id="SSF54849">
    <property type="entry name" value="GroEL-intermediate domain like"/>
    <property type="match status" value="1"/>
</dbReference>
<dbReference type="PROSITE" id="PS00296">
    <property type="entry name" value="CHAPERONINS_CPN60"/>
    <property type="match status" value="1"/>
</dbReference>
<feature type="chain" id="PRO_0000063417" description="Chaperonin GroEL 2">
    <location>
        <begin position="1"/>
        <end position="542"/>
    </location>
</feature>
<feature type="binding site" evidence="1">
    <location>
        <begin position="30"/>
        <end position="33"/>
    </location>
    <ligand>
        <name>ATP</name>
        <dbReference type="ChEBI" id="CHEBI:30616"/>
    </ligand>
</feature>
<feature type="binding site" evidence="1">
    <location>
        <position position="51"/>
    </location>
    <ligand>
        <name>ATP</name>
        <dbReference type="ChEBI" id="CHEBI:30616"/>
    </ligand>
</feature>
<feature type="binding site" evidence="1">
    <location>
        <begin position="87"/>
        <end position="91"/>
    </location>
    <ligand>
        <name>ATP</name>
        <dbReference type="ChEBI" id="CHEBI:30616"/>
    </ligand>
</feature>
<feature type="binding site" evidence="1">
    <location>
        <position position="415"/>
    </location>
    <ligand>
        <name>ATP</name>
        <dbReference type="ChEBI" id="CHEBI:30616"/>
    </ligand>
</feature>
<feature type="binding site" evidence="1">
    <location>
        <position position="495"/>
    </location>
    <ligand>
        <name>ATP</name>
        <dbReference type="ChEBI" id="CHEBI:30616"/>
    </ligand>
</feature>
<proteinExistence type="inferred from homology"/>
<gene>
    <name evidence="1" type="primary">groEL2</name>
    <name evidence="1" type="synonym">groL2</name>
    <name type="ordered locus">MCA1704</name>
</gene>
<name>CH602_METCA</name>
<keyword id="KW-0067">ATP-binding</keyword>
<keyword id="KW-0143">Chaperone</keyword>
<keyword id="KW-0963">Cytoplasm</keyword>
<keyword id="KW-0413">Isomerase</keyword>
<keyword id="KW-0547">Nucleotide-binding</keyword>
<keyword id="KW-1185">Reference proteome</keyword>
<evidence type="ECO:0000255" key="1">
    <source>
        <dbReference type="HAMAP-Rule" id="MF_00600"/>
    </source>
</evidence>
<organism>
    <name type="scientific">Methylococcus capsulatus (strain ATCC 33009 / NCIMB 11132 / Bath)</name>
    <dbReference type="NCBI Taxonomy" id="243233"/>
    <lineage>
        <taxon>Bacteria</taxon>
        <taxon>Pseudomonadati</taxon>
        <taxon>Pseudomonadota</taxon>
        <taxon>Gammaproteobacteria</taxon>
        <taxon>Methylococcales</taxon>
        <taxon>Methylococcaceae</taxon>
        <taxon>Methylococcus</taxon>
    </lineage>
</organism>
<protein>
    <recommendedName>
        <fullName evidence="1">Chaperonin GroEL 2</fullName>
        <ecNumber evidence="1">5.6.1.7</ecNumber>
    </recommendedName>
    <alternativeName>
        <fullName evidence="1">60 kDa chaperonin 2</fullName>
    </alternativeName>
    <alternativeName>
        <fullName evidence="1">Chaperonin-60 2</fullName>
        <shortName evidence="1">Cpn60 2</shortName>
    </alternativeName>
</protein>
<comment type="function">
    <text evidence="1">Together with its co-chaperonin GroES, plays an essential role in assisting protein folding. The GroEL-GroES system forms a nano-cage that allows encapsulation of the non-native substrate proteins and provides a physical environment optimized to promote and accelerate protein folding.</text>
</comment>
<comment type="catalytic activity">
    <reaction evidence="1">
        <text>ATP + H2O + a folded polypeptide = ADP + phosphate + an unfolded polypeptide.</text>
        <dbReference type="EC" id="5.6.1.7"/>
    </reaction>
</comment>
<comment type="subunit">
    <text evidence="1">Forms a cylinder of 14 subunits composed of two heptameric rings stacked back-to-back. Interacts with the co-chaperonin GroES.</text>
</comment>
<comment type="subcellular location">
    <subcellularLocation>
        <location evidence="1">Cytoplasm</location>
    </subcellularLocation>
</comment>
<comment type="similarity">
    <text evidence="1">Belongs to the chaperonin (HSP60) family.</text>
</comment>